<accession>B6HBG5</accession>
<gene>
    <name type="primary">slx4</name>
    <name type="ORF">Pc18g04010</name>
</gene>
<comment type="function">
    <text evidence="1">Regulatory subunit of the slx1-slx4 structure-specific endonuclease that resolves DNA secondary structures generated during DNA repair and recombination. Has endonuclease activity towards branched DNA substrates, introducing single-strand cuts in duplex DNA close to junctions with ss-DNA.</text>
</comment>
<comment type="subunit">
    <text evidence="1">Forms a heterodimer with slx1.</text>
</comment>
<comment type="subcellular location">
    <subcellularLocation>
        <location evidence="1">Nucleus</location>
    </subcellularLocation>
</comment>
<comment type="PTM">
    <text evidence="1">Phosphorylated in response to DNA damage.</text>
</comment>
<comment type="similarity">
    <text evidence="1">Belongs to the SLX4 family.</text>
</comment>
<dbReference type="EMBL" id="AM920433">
    <property type="protein sequence ID" value="CAP94625.1"/>
    <property type="molecule type" value="Genomic_DNA"/>
</dbReference>
<dbReference type="RefSeq" id="XP_002562237.1">
    <property type="nucleotide sequence ID" value="XM_002562191.1"/>
</dbReference>
<dbReference type="SMR" id="B6HBG5"/>
<dbReference type="STRING" id="500485.B6HBG5"/>
<dbReference type="GeneID" id="8306877"/>
<dbReference type="KEGG" id="pcs:N7525_000596"/>
<dbReference type="VEuPathDB" id="FungiDB:PCH_Pc18g04010"/>
<dbReference type="eggNOG" id="ENOG502S832">
    <property type="taxonomic scope" value="Eukaryota"/>
</dbReference>
<dbReference type="HOGENOM" id="CLU_016773_0_0_1"/>
<dbReference type="OMA" id="SICCLWK"/>
<dbReference type="OrthoDB" id="5349119at2759"/>
<dbReference type="BioCyc" id="PCHR:PC18G04010-MONOMER"/>
<dbReference type="Proteomes" id="UP000000724">
    <property type="component" value="Contig Pc00c18"/>
</dbReference>
<dbReference type="GO" id="GO:0033557">
    <property type="term" value="C:Slx1-Slx4 complex"/>
    <property type="evidence" value="ECO:0007669"/>
    <property type="project" value="UniProtKB-UniRule"/>
</dbReference>
<dbReference type="GO" id="GO:0017108">
    <property type="term" value="F:5'-flap endonuclease activity"/>
    <property type="evidence" value="ECO:0007669"/>
    <property type="project" value="InterPro"/>
</dbReference>
<dbReference type="GO" id="GO:0006310">
    <property type="term" value="P:DNA recombination"/>
    <property type="evidence" value="ECO:0007669"/>
    <property type="project" value="UniProtKB-UniRule"/>
</dbReference>
<dbReference type="GO" id="GO:0006281">
    <property type="term" value="P:DNA repair"/>
    <property type="evidence" value="ECO:0007669"/>
    <property type="project" value="UniProtKB-UniRule"/>
</dbReference>
<dbReference type="GO" id="GO:0006260">
    <property type="term" value="P:DNA replication"/>
    <property type="evidence" value="ECO:0007669"/>
    <property type="project" value="InterPro"/>
</dbReference>
<dbReference type="CDD" id="cd22999">
    <property type="entry name" value="SAP_SLX4"/>
    <property type="match status" value="1"/>
</dbReference>
<dbReference type="HAMAP" id="MF_03110">
    <property type="entry name" value="Endonuc_su_Slx4"/>
    <property type="match status" value="1"/>
</dbReference>
<dbReference type="InterPro" id="IPR027784">
    <property type="entry name" value="Slx4_ascomycetes"/>
</dbReference>
<dbReference type="InterPro" id="IPR018574">
    <property type="entry name" value="Structure-sp_endonuc_su_Slx4"/>
</dbReference>
<dbReference type="Pfam" id="PF09494">
    <property type="entry name" value="Slx4"/>
    <property type="match status" value="1"/>
</dbReference>
<keyword id="KW-0227">DNA damage</keyword>
<keyword id="KW-0233">DNA recombination</keyword>
<keyword id="KW-0234">DNA repair</keyword>
<keyword id="KW-0539">Nucleus</keyword>
<keyword id="KW-0597">Phosphoprotein</keyword>
<keyword id="KW-1185">Reference proteome</keyword>
<protein>
    <recommendedName>
        <fullName evidence="1">Structure-specific endonuclease subunit slx4</fullName>
    </recommendedName>
</protein>
<evidence type="ECO:0000255" key="1">
    <source>
        <dbReference type="HAMAP-Rule" id="MF_03110"/>
    </source>
</evidence>
<evidence type="ECO:0000256" key="2">
    <source>
        <dbReference type="SAM" id="MobiDB-lite"/>
    </source>
</evidence>
<reference key="1">
    <citation type="journal article" date="2008" name="Nat. Biotechnol.">
        <title>Genome sequencing and analysis of the filamentous fungus Penicillium chrysogenum.</title>
        <authorList>
            <person name="van den Berg M.A."/>
            <person name="Albang R."/>
            <person name="Albermann K."/>
            <person name="Badger J.H."/>
            <person name="Daran J.-M."/>
            <person name="Driessen A.J.M."/>
            <person name="Garcia-Estrada C."/>
            <person name="Fedorova N.D."/>
            <person name="Harris D.M."/>
            <person name="Heijne W.H.M."/>
            <person name="Joardar V.S."/>
            <person name="Kiel J.A.K.W."/>
            <person name="Kovalchuk A."/>
            <person name="Martin J.F."/>
            <person name="Nierman W.C."/>
            <person name="Nijland J.G."/>
            <person name="Pronk J.T."/>
            <person name="Roubos J.A."/>
            <person name="van der Klei I.J."/>
            <person name="van Peij N.N.M.E."/>
            <person name="Veenhuis M."/>
            <person name="von Doehren H."/>
            <person name="Wagner C."/>
            <person name="Wortman J.R."/>
            <person name="Bovenberg R.A.L."/>
        </authorList>
    </citation>
    <scope>NUCLEOTIDE SEQUENCE [LARGE SCALE GENOMIC DNA]</scope>
    <source>
        <strain>ATCC 28089 / DSM 1075 / NRRL 1951 / Wisconsin 54-1255</strain>
    </source>
</reference>
<feature type="chain" id="PRO_0000388038" description="Structure-specific endonuclease subunit slx4">
    <location>
        <begin position="1"/>
        <end position="884"/>
    </location>
</feature>
<feature type="region of interest" description="Disordered" evidence="2">
    <location>
        <begin position="1"/>
        <end position="324"/>
    </location>
</feature>
<feature type="region of interest" description="Disordered" evidence="2">
    <location>
        <begin position="394"/>
        <end position="434"/>
    </location>
</feature>
<feature type="region of interest" description="Disordered" evidence="2">
    <location>
        <begin position="459"/>
        <end position="587"/>
    </location>
</feature>
<feature type="region of interest" description="Disordered" evidence="2">
    <location>
        <begin position="618"/>
        <end position="707"/>
    </location>
</feature>
<feature type="region of interest" description="Disordered" evidence="2">
    <location>
        <begin position="753"/>
        <end position="781"/>
    </location>
</feature>
<feature type="compositionally biased region" description="Polar residues" evidence="2">
    <location>
        <begin position="44"/>
        <end position="53"/>
    </location>
</feature>
<feature type="compositionally biased region" description="Basic and acidic residues" evidence="2">
    <location>
        <begin position="195"/>
        <end position="211"/>
    </location>
</feature>
<feature type="compositionally biased region" description="Low complexity" evidence="2">
    <location>
        <begin position="294"/>
        <end position="304"/>
    </location>
</feature>
<feature type="compositionally biased region" description="Basic residues" evidence="2">
    <location>
        <begin position="309"/>
        <end position="320"/>
    </location>
</feature>
<feature type="compositionally biased region" description="Basic and acidic residues" evidence="2">
    <location>
        <begin position="394"/>
        <end position="404"/>
    </location>
</feature>
<feature type="compositionally biased region" description="Low complexity" evidence="2">
    <location>
        <begin position="535"/>
        <end position="558"/>
    </location>
</feature>
<feature type="compositionally biased region" description="Polar residues" evidence="2">
    <location>
        <begin position="620"/>
        <end position="636"/>
    </location>
</feature>
<feature type="compositionally biased region" description="Low complexity" evidence="2">
    <location>
        <begin position="648"/>
        <end position="665"/>
    </location>
</feature>
<feature type="compositionally biased region" description="Polar residues" evidence="2">
    <location>
        <begin position="677"/>
        <end position="693"/>
    </location>
</feature>
<name>SLX4_PENRW</name>
<proteinExistence type="inferred from homology"/>
<sequence>MTSMADVIILSSSPHPPRSPGPGRHDTKPVSHALPRSATPPPIRSTSDLSQPHTRSRFFPTPVASNKCPDGASKPKKRLTKDPASETSKQTAPSKPRREAKKVAGAPGTTALGEPQPEAVGKKNDAVKPTKSRSRRNAKSKDSGNMTLAGKVTKTSGDLPSKKSSKGGKKTVATKLSPSEDTSEKSTPKESNALGKDEVLRLDEAMRRRMDWTPPRETAYEEIATVTDRGSQDQDRDSSSSGGFGKLVSDYNYSGSALHPRDFVQNANGEGPTKRRRIELVNPEIQALLNGRYSDSSDQSSGQGENTGKPKKTTKGKPKKFTTLTARMTAQYSKNDAEEDEPVIDCLAGIRTTKGRQKKAKEIEKQSSSTVLSPEAAVEFLNDQDLIFGSCSQLEKDDSPETLRETQQAIRVPEGPSYSKGTHNKDPSAIQESSTRFVSKLAGTRNLWCVGARDTEGSLIQPETLNVVDLTNGEESPGKKSQDDAENPSHNTLQSDWYELEFADIDSPSEKRPSPLPTESVLDSDTQVQAPAPIPADTATATATATAVVKAAKPAKGANDTPTEAVDSQPASSQAPPMPQYTGFTDAELSKQVSSYGFKAVRGRKKMIDLLRQCWESKHGSGSNAASDSQLICQLEQQEEPASKMDNVPKSTSAAKTKATVKPKAGTSIRNRKSLDATKSTSASRTNLQTSPKKNSREKPITGTSTSFIDVEEIQDSEEEIIPSPSQVQKHYTDIYSKSKTGSWVQDHSLDILTKTPSPSPTKRKVVSSDIPAKRPPSSASIATTRMTESSKEISLAEISAQITQAVRLQPQLSPLSSSRGSRSRPTWHEKILMYDPIVLEDFTAWLNIEGLGLVGEDREVGTASVREWCESKGICCCWKKNAS</sequence>
<organism>
    <name type="scientific">Penicillium rubens (strain ATCC 28089 / DSM 1075 / NRRL 1951 / Wisconsin 54-1255)</name>
    <name type="common">Penicillium chrysogenum</name>
    <dbReference type="NCBI Taxonomy" id="500485"/>
    <lineage>
        <taxon>Eukaryota</taxon>
        <taxon>Fungi</taxon>
        <taxon>Dikarya</taxon>
        <taxon>Ascomycota</taxon>
        <taxon>Pezizomycotina</taxon>
        <taxon>Eurotiomycetes</taxon>
        <taxon>Eurotiomycetidae</taxon>
        <taxon>Eurotiales</taxon>
        <taxon>Aspergillaceae</taxon>
        <taxon>Penicillium</taxon>
        <taxon>Penicillium chrysogenum species complex</taxon>
    </lineage>
</organism>